<proteinExistence type="inferred from homology"/>
<evidence type="ECO:0000255" key="1">
    <source>
        <dbReference type="HAMAP-Rule" id="MF_00046"/>
    </source>
</evidence>
<feature type="chain" id="PRO_1000004341" description="UDP-N-acetylmuramate--L-alanine ligase">
    <location>
        <begin position="1"/>
        <end position="491"/>
    </location>
</feature>
<feature type="binding site" evidence="1">
    <location>
        <begin position="126"/>
        <end position="132"/>
    </location>
    <ligand>
        <name>ATP</name>
        <dbReference type="ChEBI" id="CHEBI:30616"/>
    </ligand>
</feature>
<comment type="function">
    <text evidence="1">Cell wall formation.</text>
</comment>
<comment type="catalytic activity">
    <reaction evidence="1">
        <text>UDP-N-acetyl-alpha-D-muramate + L-alanine + ATP = UDP-N-acetyl-alpha-D-muramoyl-L-alanine + ADP + phosphate + H(+)</text>
        <dbReference type="Rhea" id="RHEA:23372"/>
        <dbReference type="ChEBI" id="CHEBI:15378"/>
        <dbReference type="ChEBI" id="CHEBI:30616"/>
        <dbReference type="ChEBI" id="CHEBI:43474"/>
        <dbReference type="ChEBI" id="CHEBI:57972"/>
        <dbReference type="ChEBI" id="CHEBI:70757"/>
        <dbReference type="ChEBI" id="CHEBI:83898"/>
        <dbReference type="ChEBI" id="CHEBI:456216"/>
        <dbReference type="EC" id="6.3.2.8"/>
    </reaction>
</comment>
<comment type="pathway">
    <text evidence="1">Cell wall biogenesis; peptidoglycan biosynthesis.</text>
</comment>
<comment type="subcellular location">
    <subcellularLocation>
        <location evidence="1">Cytoplasm</location>
    </subcellularLocation>
</comment>
<comment type="similarity">
    <text evidence="1">Belongs to the MurCDEF family.</text>
</comment>
<keyword id="KW-0067">ATP-binding</keyword>
<keyword id="KW-0131">Cell cycle</keyword>
<keyword id="KW-0132">Cell division</keyword>
<keyword id="KW-0133">Cell shape</keyword>
<keyword id="KW-0961">Cell wall biogenesis/degradation</keyword>
<keyword id="KW-0963">Cytoplasm</keyword>
<keyword id="KW-0436">Ligase</keyword>
<keyword id="KW-0547">Nucleotide-binding</keyword>
<keyword id="KW-0573">Peptidoglycan synthesis</keyword>
<protein>
    <recommendedName>
        <fullName evidence="1">UDP-N-acetylmuramate--L-alanine ligase</fullName>
        <ecNumber evidence="1">6.3.2.8</ecNumber>
    </recommendedName>
    <alternativeName>
        <fullName evidence="1">UDP-N-acetylmuramoyl-L-alanine synthetase</fullName>
    </alternativeName>
</protein>
<gene>
    <name evidence="1" type="primary">murC</name>
    <name type="ordered locus">UTI89_C0100</name>
</gene>
<reference key="1">
    <citation type="journal article" date="2006" name="Proc. Natl. Acad. Sci. U.S.A.">
        <title>Identification of genes subject to positive selection in uropathogenic strains of Escherichia coli: a comparative genomics approach.</title>
        <authorList>
            <person name="Chen S.L."/>
            <person name="Hung C.-S."/>
            <person name="Xu J."/>
            <person name="Reigstad C.S."/>
            <person name="Magrini V."/>
            <person name="Sabo A."/>
            <person name="Blasiar D."/>
            <person name="Bieri T."/>
            <person name="Meyer R.R."/>
            <person name="Ozersky P."/>
            <person name="Armstrong J.R."/>
            <person name="Fulton R.S."/>
            <person name="Latreille J.P."/>
            <person name="Spieth J."/>
            <person name="Hooton T.M."/>
            <person name="Mardis E.R."/>
            <person name="Hultgren S.J."/>
            <person name="Gordon J.I."/>
        </authorList>
    </citation>
    <scope>NUCLEOTIDE SEQUENCE [LARGE SCALE GENOMIC DNA]</scope>
    <source>
        <strain>UTI89 / UPEC</strain>
    </source>
</reference>
<organism>
    <name type="scientific">Escherichia coli (strain UTI89 / UPEC)</name>
    <dbReference type="NCBI Taxonomy" id="364106"/>
    <lineage>
        <taxon>Bacteria</taxon>
        <taxon>Pseudomonadati</taxon>
        <taxon>Pseudomonadota</taxon>
        <taxon>Gammaproteobacteria</taxon>
        <taxon>Enterobacterales</taxon>
        <taxon>Enterobacteriaceae</taxon>
        <taxon>Escherichia</taxon>
    </lineage>
</organism>
<sequence>MNTQQLAKLRSIVPEMRRVRHIHFVGIGGAGMGGIAEVLANEGYQISGSDLAPNPVTQQLMNLGATIYFNHRPENVRDASVVVVSSAISADNPEIVAAHEARIPVIRRAEMLAELMRFRHGIAIAGTHGKTTTTAMVSSIYAEAGLDPTFVNGGLVKAAGVHARLGHGRYLIAEADESDASFLHLQPMVAIVTNIEADHMDTYQGDFENLKQTFINFLHNLPFYGRAVMCVDDPVIRELLPRVGRQTTTYGFSEDADVRVEDYQQIGPQGHFTLLRQDKEPMRVTLNAPGRHNALNAAAAVAVATEEGIDDEAILRALESFQGTGRRFDFLGEFPLEPVNGKSGTAMLVDDYGHHPTEVDATIKAARAGWPDKNLVMLFQPHRFTRTRDLYDDFANVLTQVDTLLMLEVYPAGEAPIPGADSRSLCRTIRGRGKIDPILVPDPAQVAEMLAPVLTGNDLILVQGAGNIGKIARSLAEIKLKPQTPEEEQHD</sequence>
<accession>Q1RGA4</accession>
<name>MURC_ECOUT</name>
<dbReference type="EC" id="6.3.2.8" evidence="1"/>
<dbReference type="EMBL" id="CP000243">
    <property type="protein sequence ID" value="ABE05610.1"/>
    <property type="molecule type" value="Genomic_DNA"/>
</dbReference>
<dbReference type="RefSeq" id="WP_001096048.1">
    <property type="nucleotide sequence ID" value="NZ_CP064825.1"/>
</dbReference>
<dbReference type="SMR" id="Q1RGA4"/>
<dbReference type="GeneID" id="75169991"/>
<dbReference type="KEGG" id="eci:UTI89_C0100"/>
<dbReference type="HOGENOM" id="CLU_028104_2_2_6"/>
<dbReference type="UniPathway" id="UPA00219"/>
<dbReference type="Proteomes" id="UP000001952">
    <property type="component" value="Chromosome"/>
</dbReference>
<dbReference type="GO" id="GO:0005737">
    <property type="term" value="C:cytoplasm"/>
    <property type="evidence" value="ECO:0007669"/>
    <property type="project" value="UniProtKB-SubCell"/>
</dbReference>
<dbReference type="GO" id="GO:0005524">
    <property type="term" value="F:ATP binding"/>
    <property type="evidence" value="ECO:0007669"/>
    <property type="project" value="UniProtKB-UniRule"/>
</dbReference>
<dbReference type="GO" id="GO:0008763">
    <property type="term" value="F:UDP-N-acetylmuramate-L-alanine ligase activity"/>
    <property type="evidence" value="ECO:0007669"/>
    <property type="project" value="UniProtKB-UniRule"/>
</dbReference>
<dbReference type="GO" id="GO:0051301">
    <property type="term" value="P:cell division"/>
    <property type="evidence" value="ECO:0007669"/>
    <property type="project" value="UniProtKB-KW"/>
</dbReference>
<dbReference type="GO" id="GO:0071555">
    <property type="term" value="P:cell wall organization"/>
    <property type="evidence" value="ECO:0007669"/>
    <property type="project" value="UniProtKB-KW"/>
</dbReference>
<dbReference type="GO" id="GO:0009252">
    <property type="term" value="P:peptidoglycan biosynthetic process"/>
    <property type="evidence" value="ECO:0007669"/>
    <property type="project" value="UniProtKB-UniRule"/>
</dbReference>
<dbReference type="GO" id="GO:0008360">
    <property type="term" value="P:regulation of cell shape"/>
    <property type="evidence" value="ECO:0007669"/>
    <property type="project" value="UniProtKB-KW"/>
</dbReference>
<dbReference type="FunFam" id="3.40.1190.10:FF:000001">
    <property type="entry name" value="UDP-N-acetylmuramate--L-alanine ligase"/>
    <property type="match status" value="1"/>
</dbReference>
<dbReference type="FunFam" id="3.40.50.720:FF:000046">
    <property type="entry name" value="UDP-N-acetylmuramate--L-alanine ligase"/>
    <property type="match status" value="1"/>
</dbReference>
<dbReference type="FunFam" id="3.90.190.20:FF:000001">
    <property type="entry name" value="UDP-N-acetylmuramate--L-alanine ligase"/>
    <property type="match status" value="1"/>
</dbReference>
<dbReference type="Gene3D" id="3.90.190.20">
    <property type="entry name" value="Mur ligase, C-terminal domain"/>
    <property type="match status" value="1"/>
</dbReference>
<dbReference type="Gene3D" id="3.40.1190.10">
    <property type="entry name" value="Mur-like, catalytic domain"/>
    <property type="match status" value="1"/>
</dbReference>
<dbReference type="Gene3D" id="3.40.50.720">
    <property type="entry name" value="NAD(P)-binding Rossmann-like Domain"/>
    <property type="match status" value="1"/>
</dbReference>
<dbReference type="HAMAP" id="MF_00046">
    <property type="entry name" value="MurC"/>
    <property type="match status" value="1"/>
</dbReference>
<dbReference type="InterPro" id="IPR036565">
    <property type="entry name" value="Mur-like_cat_sf"/>
</dbReference>
<dbReference type="InterPro" id="IPR004101">
    <property type="entry name" value="Mur_ligase_C"/>
</dbReference>
<dbReference type="InterPro" id="IPR036615">
    <property type="entry name" value="Mur_ligase_C_dom_sf"/>
</dbReference>
<dbReference type="InterPro" id="IPR013221">
    <property type="entry name" value="Mur_ligase_cen"/>
</dbReference>
<dbReference type="InterPro" id="IPR000713">
    <property type="entry name" value="Mur_ligase_N"/>
</dbReference>
<dbReference type="InterPro" id="IPR050061">
    <property type="entry name" value="MurCDEF_pg_biosynth"/>
</dbReference>
<dbReference type="InterPro" id="IPR005758">
    <property type="entry name" value="UDP-N-AcMur_Ala_ligase_MurC"/>
</dbReference>
<dbReference type="NCBIfam" id="TIGR01082">
    <property type="entry name" value="murC"/>
    <property type="match status" value="1"/>
</dbReference>
<dbReference type="PANTHER" id="PTHR43445:SF3">
    <property type="entry name" value="UDP-N-ACETYLMURAMATE--L-ALANINE LIGASE"/>
    <property type="match status" value="1"/>
</dbReference>
<dbReference type="PANTHER" id="PTHR43445">
    <property type="entry name" value="UDP-N-ACETYLMURAMATE--L-ALANINE LIGASE-RELATED"/>
    <property type="match status" value="1"/>
</dbReference>
<dbReference type="Pfam" id="PF01225">
    <property type="entry name" value="Mur_ligase"/>
    <property type="match status" value="1"/>
</dbReference>
<dbReference type="Pfam" id="PF02875">
    <property type="entry name" value="Mur_ligase_C"/>
    <property type="match status" value="1"/>
</dbReference>
<dbReference type="Pfam" id="PF08245">
    <property type="entry name" value="Mur_ligase_M"/>
    <property type="match status" value="1"/>
</dbReference>
<dbReference type="SUPFAM" id="SSF51984">
    <property type="entry name" value="MurCD N-terminal domain"/>
    <property type="match status" value="1"/>
</dbReference>
<dbReference type="SUPFAM" id="SSF53623">
    <property type="entry name" value="MurD-like peptide ligases, catalytic domain"/>
    <property type="match status" value="1"/>
</dbReference>
<dbReference type="SUPFAM" id="SSF53244">
    <property type="entry name" value="MurD-like peptide ligases, peptide-binding domain"/>
    <property type="match status" value="1"/>
</dbReference>